<reference key="1">
    <citation type="journal article" date="2009" name="Science">
        <title>The dynamics and time scale of ongoing genomic erosion in symbiotic bacteria.</title>
        <authorList>
            <person name="Moran N.A."/>
            <person name="McLaughlin H.J."/>
            <person name="Sorek R."/>
        </authorList>
    </citation>
    <scope>NUCLEOTIDE SEQUENCE [LARGE SCALE GENOMIC DNA]</scope>
    <source>
        <strain>5A</strain>
    </source>
</reference>
<feature type="chain" id="PRO_1000118040" description="Elongation factor 4">
    <location>
        <begin position="1"/>
        <end position="610"/>
    </location>
</feature>
<feature type="domain" description="tr-type G">
    <location>
        <begin position="15"/>
        <end position="197"/>
    </location>
</feature>
<feature type="binding site" evidence="1">
    <location>
        <begin position="27"/>
        <end position="32"/>
    </location>
    <ligand>
        <name>GTP</name>
        <dbReference type="ChEBI" id="CHEBI:37565"/>
    </ligand>
</feature>
<feature type="binding site" evidence="1">
    <location>
        <begin position="144"/>
        <end position="147"/>
    </location>
    <ligand>
        <name>GTP</name>
        <dbReference type="ChEBI" id="CHEBI:37565"/>
    </ligand>
</feature>
<comment type="function">
    <text evidence="1">Required for accurate and efficient protein synthesis under certain stress conditions. May act as a fidelity factor of the translation reaction, by catalyzing a one-codon backward translocation of tRNAs on improperly translocated ribosomes. Back-translocation proceeds from a post-translocation (POST) complex to a pre-translocation (PRE) complex, thus giving elongation factor G a second chance to translocate the tRNAs correctly. Binds to ribosomes in a GTP-dependent manner.</text>
</comment>
<comment type="catalytic activity">
    <reaction evidence="1">
        <text>GTP + H2O = GDP + phosphate + H(+)</text>
        <dbReference type="Rhea" id="RHEA:19669"/>
        <dbReference type="ChEBI" id="CHEBI:15377"/>
        <dbReference type="ChEBI" id="CHEBI:15378"/>
        <dbReference type="ChEBI" id="CHEBI:37565"/>
        <dbReference type="ChEBI" id="CHEBI:43474"/>
        <dbReference type="ChEBI" id="CHEBI:58189"/>
        <dbReference type="EC" id="3.6.5.n1"/>
    </reaction>
</comment>
<comment type="subcellular location">
    <subcellularLocation>
        <location evidence="1">Cell membrane</location>
        <topology evidence="1">Peripheral membrane protein</topology>
        <orientation evidence="1">Cytoplasmic side</orientation>
    </subcellularLocation>
</comment>
<comment type="similarity">
    <text evidence="1">Belongs to the TRAFAC class translation factor GTPase superfamily. Classic translation factor GTPase family. LepA subfamily.</text>
</comment>
<keyword id="KW-1003">Cell membrane</keyword>
<keyword id="KW-0342">GTP-binding</keyword>
<keyword id="KW-0378">Hydrolase</keyword>
<keyword id="KW-0472">Membrane</keyword>
<keyword id="KW-0547">Nucleotide-binding</keyword>
<keyword id="KW-0648">Protein biosynthesis</keyword>
<dbReference type="EC" id="3.6.5.n1" evidence="1"/>
<dbReference type="EMBL" id="CP001161">
    <property type="protein sequence ID" value="ACL30624.1"/>
    <property type="molecule type" value="Genomic_DNA"/>
</dbReference>
<dbReference type="SMR" id="B8D953"/>
<dbReference type="KEGG" id="bap:BUAP5A_255"/>
<dbReference type="HOGENOM" id="CLU_009995_3_3_6"/>
<dbReference type="OrthoDB" id="9804431at2"/>
<dbReference type="Proteomes" id="UP000006904">
    <property type="component" value="Chromosome"/>
</dbReference>
<dbReference type="GO" id="GO:0005886">
    <property type="term" value="C:plasma membrane"/>
    <property type="evidence" value="ECO:0007669"/>
    <property type="project" value="UniProtKB-SubCell"/>
</dbReference>
<dbReference type="GO" id="GO:0005525">
    <property type="term" value="F:GTP binding"/>
    <property type="evidence" value="ECO:0007669"/>
    <property type="project" value="UniProtKB-UniRule"/>
</dbReference>
<dbReference type="GO" id="GO:0003924">
    <property type="term" value="F:GTPase activity"/>
    <property type="evidence" value="ECO:0007669"/>
    <property type="project" value="UniProtKB-UniRule"/>
</dbReference>
<dbReference type="GO" id="GO:0097216">
    <property type="term" value="F:guanosine tetraphosphate binding"/>
    <property type="evidence" value="ECO:0007669"/>
    <property type="project" value="UniProtKB-ARBA"/>
</dbReference>
<dbReference type="GO" id="GO:0043022">
    <property type="term" value="F:ribosome binding"/>
    <property type="evidence" value="ECO:0007669"/>
    <property type="project" value="UniProtKB-UniRule"/>
</dbReference>
<dbReference type="GO" id="GO:0003746">
    <property type="term" value="F:translation elongation factor activity"/>
    <property type="evidence" value="ECO:0007669"/>
    <property type="project" value="UniProtKB-UniRule"/>
</dbReference>
<dbReference type="GO" id="GO:0045727">
    <property type="term" value="P:positive regulation of translation"/>
    <property type="evidence" value="ECO:0007669"/>
    <property type="project" value="UniProtKB-UniRule"/>
</dbReference>
<dbReference type="CDD" id="cd03699">
    <property type="entry name" value="EF4_II"/>
    <property type="match status" value="1"/>
</dbReference>
<dbReference type="CDD" id="cd16260">
    <property type="entry name" value="EF4_III"/>
    <property type="match status" value="1"/>
</dbReference>
<dbReference type="CDD" id="cd01890">
    <property type="entry name" value="LepA"/>
    <property type="match status" value="1"/>
</dbReference>
<dbReference type="CDD" id="cd03709">
    <property type="entry name" value="lepA_C"/>
    <property type="match status" value="1"/>
</dbReference>
<dbReference type="FunFam" id="3.40.50.300:FF:000078">
    <property type="entry name" value="Elongation factor 4"/>
    <property type="match status" value="1"/>
</dbReference>
<dbReference type="FunFam" id="2.40.30.10:FF:000015">
    <property type="entry name" value="Translation factor GUF1, mitochondrial"/>
    <property type="match status" value="1"/>
</dbReference>
<dbReference type="FunFam" id="3.30.70.240:FF:000007">
    <property type="entry name" value="Translation factor GUF1, mitochondrial"/>
    <property type="match status" value="1"/>
</dbReference>
<dbReference type="FunFam" id="3.30.70.2570:FF:000001">
    <property type="entry name" value="Translation factor GUF1, mitochondrial"/>
    <property type="match status" value="1"/>
</dbReference>
<dbReference type="FunFam" id="3.30.70.870:FF:000004">
    <property type="entry name" value="Translation factor GUF1, mitochondrial"/>
    <property type="match status" value="1"/>
</dbReference>
<dbReference type="Gene3D" id="3.30.70.240">
    <property type="match status" value="1"/>
</dbReference>
<dbReference type="Gene3D" id="3.30.70.2570">
    <property type="entry name" value="Elongation factor 4, C-terminal domain"/>
    <property type="match status" value="1"/>
</dbReference>
<dbReference type="Gene3D" id="3.30.70.870">
    <property type="entry name" value="Elongation Factor G (Translational Gtpase), domain 3"/>
    <property type="match status" value="1"/>
</dbReference>
<dbReference type="Gene3D" id="3.40.50.300">
    <property type="entry name" value="P-loop containing nucleotide triphosphate hydrolases"/>
    <property type="match status" value="1"/>
</dbReference>
<dbReference type="Gene3D" id="2.40.30.10">
    <property type="entry name" value="Translation factors"/>
    <property type="match status" value="1"/>
</dbReference>
<dbReference type="HAMAP" id="MF_00071">
    <property type="entry name" value="LepA"/>
    <property type="match status" value="1"/>
</dbReference>
<dbReference type="InterPro" id="IPR006297">
    <property type="entry name" value="EF-4"/>
</dbReference>
<dbReference type="InterPro" id="IPR035647">
    <property type="entry name" value="EFG_III/V"/>
</dbReference>
<dbReference type="InterPro" id="IPR000640">
    <property type="entry name" value="EFG_V-like"/>
</dbReference>
<dbReference type="InterPro" id="IPR004161">
    <property type="entry name" value="EFTu-like_2"/>
</dbReference>
<dbReference type="InterPro" id="IPR031157">
    <property type="entry name" value="G_TR_CS"/>
</dbReference>
<dbReference type="InterPro" id="IPR038363">
    <property type="entry name" value="LepA_C_sf"/>
</dbReference>
<dbReference type="InterPro" id="IPR013842">
    <property type="entry name" value="LepA_CTD"/>
</dbReference>
<dbReference type="InterPro" id="IPR035654">
    <property type="entry name" value="LepA_IV"/>
</dbReference>
<dbReference type="InterPro" id="IPR027417">
    <property type="entry name" value="P-loop_NTPase"/>
</dbReference>
<dbReference type="InterPro" id="IPR005225">
    <property type="entry name" value="Small_GTP-bd"/>
</dbReference>
<dbReference type="InterPro" id="IPR000795">
    <property type="entry name" value="T_Tr_GTP-bd_dom"/>
</dbReference>
<dbReference type="NCBIfam" id="TIGR01393">
    <property type="entry name" value="lepA"/>
    <property type="match status" value="1"/>
</dbReference>
<dbReference type="NCBIfam" id="TIGR00231">
    <property type="entry name" value="small_GTP"/>
    <property type="match status" value="1"/>
</dbReference>
<dbReference type="PANTHER" id="PTHR43512:SF4">
    <property type="entry name" value="TRANSLATION FACTOR GUF1 HOMOLOG, CHLOROPLASTIC"/>
    <property type="match status" value="1"/>
</dbReference>
<dbReference type="PANTHER" id="PTHR43512">
    <property type="entry name" value="TRANSLATION FACTOR GUF1-RELATED"/>
    <property type="match status" value="1"/>
</dbReference>
<dbReference type="Pfam" id="PF00679">
    <property type="entry name" value="EFG_C"/>
    <property type="match status" value="1"/>
</dbReference>
<dbReference type="Pfam" id="PF00009">
    <property type="entry name" value="GTP_EFTU"/>
    <property type="match status" value="1"/>
</dbReference>
<dbReference type="Pfam" id="PF03144">
    <property type="entry name" value="GTP_EFTU_D2"/>
    <property type="match status" value="1"/>
</dbReference>
<dbReference type="Pfam" id="PF06421">
    <property type="entry name" value="LepA_C"/>
    <property type="match status" value="1"/>
</dbReference>
<dbReference type="PRINTS" id="PR00315">
    <property type="entry name" value="ELONGATNFCT"/>
</dbReference>
<dbReference type="SUPFAM" id="SSF54980">
    <property type="entry name" value="EF-G C-terminal domain-like"/>
    <property type="match status" value="2"/>
</dbReference>
<dbReference type="SUPFAM" id="SSF52540">
    <property type="entry name" value="P-loop containing nucleoside triphosphate hydrolases"/>
    <property type="match status" value="1"/>
</dbReference>
<dbReference type="PROSITE" id="PS00301">
    <property type="entry name" value="G_TR_1"/>
    <property type="match status" value="1"/>
</dbReference>
<dbReference type="PROSITE" id="PS51722">
    <property type="entry name" value="G_TR_2"/>
    <property type="match status" value="1"/>
</dbReference>
<evidence type="ECO:0000255" key="1">
    <source>
        <dbReference type="HAMAP-Rule" id="MF_00071"/>
    </source>
</evidence>
<sequence>MLKCIKHEYGIKNMKSIRNFSIIAHIDHGKSTLSDRLIQLCGGLSEREMSNQVLDSMDLEKERGITIKAQSVMIDYKNKSGNIFNLNFIDTPGHVDFSYEVSRSLAACEGALLVVDSTQGVEAQTLANCYTAIDMNVEIVPVLNKIDLPNSNADKVAKEIEDIIGIPALDAIRCSAKTGEGIEDLIERIINDIPYPKGSINSPLQALIIDSWFDNYLGVVSLIRIKNGILFEKDKIQVMSTGKNYYVDQIGVFTPKKLNKNQLRCGEVGWIICGIKNIIAAPVGDTLTTAKNPAKNMIIGFKKIKPQIYAGLFPLTSDQYEMFRDALGKLSLNDASLFYEPENSVALGFGFRCGFLGVLHMEIIQARLEREYSIDLITTIPTVIYEIELINGKIIYLDTPSNFPNMNDIKIIKEPIVECSILSPPQFLGSIIKLCIKKRGVQINMVYHSHQVLLKYNIPMNEVILNFFDELKSVSSGYASLEYDFKYFQSVKMVRIDILINSEKVDALTILSYHKNAQSRSREIVDKMKKLIPRHQFDISIQAVINNSVIARSTIKQLRKNVLSKCYGGDVSRKKKLLQKQKDGKKRMKKIGNVNVPKTVFLSILNSRES</sequence>
<protein>
    <recommendedName>
        <fullName evidence="1">Elongation factor 4</fullName>
        <shortName evidence="1">EF-4</shortName>
        <ecNumber evidence="1">3.6.5.n1</ecNumber>
    </recommendedName>
    <alternativeName>
        <fullName evidence="1">Ribosomal back-translocase LepA</fullName>
    </alternativeName>
</protein>
<proteinExistence type="inferred from homology"/>
<name>LEPA_BUCA5</name>
<organism>
    <name type="scientific">Buchnera aphidicola subsp. Acyrthosiphon pisum (strain 5A)</name>
    <dbReference type="NCBI Taxonomy" id="563178"/>
    <lineage>
        <taxon>Bacteria</taxon>
        <taxon>Pseudomonadati</taxon>
        <taxon>Pseudomonadota</taxon>
        <taxon>Gammaproteobacteria</taxon>
        <taxon>Enterobacterales</taxon>
        <taxon>Erwiniaceae</taxon>
        <taxon>Buchnera</taxon>
    </lineage>
</organism>
<gene>
    <name evidence="1" type="primary">lepA</name>
    <name type="ordered locus">BUAP5A_255</name>
</gene>
<accession>B8D953</accession>